<keyword id="KW-0414">Isoprene biosynthesis</keyword>
<keyword id="KW-0464">Manganese</keyword>
<keyword id="KW-0479">Metal-binding</keyword>
<keyword id="KW-0521">NADP</keyword>
<keyword id="KW-0560">Oxidoreductase</keyword>
<feature type="chain" id="PRO_1000098485" description="1-deoxy-D-xylulose 5-phosphate reductoisomerase">
    <location>
        <begin position="1"/>
        <end position="379"/>
    </location>
</feature>
<feature type="binding site" evidence="1">
    <location>
        <position position="10"/>
    </location>
    <ligand>
        <name>NADPH</name>
        <dbReference type="ChEBI" id="CHEBI:57783"/>
    </ligand>
</feature>
<feature type="binding site" evidence="1">
    <location>
        <position position="11"/>
    </location>
    <ligand>
        <name>NADPH</name>
        <dbReference type="ChEBI" id="CHEBI:57783"/>
    </ligand>
</feature>
<feature type="binding site" evidence="1">
    <location>
        <position position="12"/>
    </location>
    <ligand>
        <name>NADPH</name>
        <dbReference type="ChEBI" id="CHEBI:57783"/>
    </ligand>
</feature>
<feature type="binding site" evidence="1">
    <location>
        <position position="13"/>
    </location>
    <ligand>
        <name>NADPH</name>
        <dbReference type="ChEBI" id="CHEBI:57783"/>
    </ligand>
</feature>
<feature type="binding site" evidence="1">
    <location>
        <position position="38"/>
    </location>
    <ligand>
        <name>NADPH</name>
        <dbReference type="ChEBI" id="CHEBI:57783"/>
    </ligand>
</feature>
<feature type="binding site" evidence="1">
    <location>
        <position position="39"/>
    </location>
    <ligand>
        <name>NADPH</name>
        <dbReference type="ChEBI" id="CHEBI:57783"/>
    </ligand>
</feature>
<feature type="binding site" evidence="1">
    <location>
        <position position="121"/>
    </location>
    <ligand>
        <name>NADPH</name>
        <dbReference type="ChEBI" id="CHEBI:57783"/>
    </ligand>
</feature>
<feature type="binding site" evidence="1">
    <location>
        <position position="122"/>
    </location>
    <ligand>
        <name>1-deoxy-D-xylulose 5-phosphate</name>
        <dbReference type="ChEBI" id="CHEBI:57792"/>
    </ligand>
</feature>
<feature type="binding site" evidence="1">
    <location>
        <position position="123"/>
    </location>
    <ligand>
        <name>NADPH</name>
        <dbReference type="ChEBI" id="CHEBI:57783"/>
    </ligand>
</feature>
<feature type="binding site" evidence="1">
    <location>
        <position position="147"/>
    </location>
    <ligand>
        <name>Mn(2+)</name>
        <dbReference type="ChEBI" id="CHEBI:29035"/>
    </ligand>
</feature>
<feature type="binding site" evidence="1">
    <location>
        <position position="148"/>
    </location>
    <ligand>
        <name>1-deoxy-D-xylulose 5-phosphate</name>
        <dbReference type="ChEBI" id="CHEBI:57792"/>
    </ligand>
</feature>
<feature type="binding site" evidence="1">
    <location>
        <position position="149"/>
    </location>
    <ligand>
        <name>1-deoxy-D-xylulose 5-phosphate</name>
        <dbReference type="ChEBI" id="CHEBI:57792"/>
    </ligand>
</feature>
<feature type="binding site" evidence="1">
    <location>
        <position position="149"/>
    </location>
    <ligand>
        <name>Mn(2+)</name>
        <dbReference type="ChEBI" id="CHEBI:29035"/>
    </ligand>
</feature>
<feature type="binding site" evidence="1">
    <location>
        <position position="173"/>
    </location>
    <ligand>
        <name>1-deoxy-D-xylulose 5-phosphate</name>
        <dbReference type="ChEBI" id="CHEBI:57792"/>
    </ligand>
</feature>
<feature type="binding site" evidence="1">
    <location>
        <position position="196"/>
    </location>
    <ligand>
        <name>1-deoxy-D-xylulose 5-phosphate</name>
        <dbReference type="ChEBI" id="CHEBI:57792"/>
    </ligand>
</feature>
<feature type="binding site" evidence="1">
    <location>
        <position position="202"/>
    </location>
    <ligand>
        <name>NADPH</name>
        <dbReference type="ChEBI" id="CHEBI:57783"/>
    </ligand>
</feature>
<feature type="binding site" evidence="1">
    <location>
        <position position="209"/>
    </location>
    <ligand>
        <name>1-deoxy-D-xylulose 5-phosphate</name>
        <dbReference type="ChEBI" id="CHEBI:57792"/>
    </ligand>
</feature>
<feature type="binding site" evidence="1">
    <location>
        <position position="214"/>
    </location>
    <ligand>
        <name>1-deoxy-D-xylulose 5-phosphate</name>
        <dbReference type="ChEBI" id="CHEBI:57792"/>
    </ligand>
</feature>
<feature type="binding site" evidence="1">
    <location>
        <position position="215"/>
    </location>
    <ligand>
        <name>1-deoxy-D-xylulose 5-phosphate</name>
        <dbReference type="ChEBI" id="CHEBI:57792"/>
    </ligand>
</feature>
<feature type="binding site" evidence="1">
    <location>
        <position position="218"/>
    </location>
    <ligand>
        <name>1-deoxy-D-xylulose 5-phosphate</name>
        <dbReference type="ChEBI" id="CHEBI:57792"/>
    </ligand>
</feature>
<feature type="binding site" evidence="1">
    <location>
        <position position="218"/>
    </location>
    <ligand>
        <name>Mn(2+)</name>
        <dbReference type="ChEBI" id="CHEBI:29035"/>
    </ligand>
</feature>
<dbReference type="EC" id="1.1.1.267" evidence="1"/>
<dbReference type="EMBL" id="AM884177">
    <property type="protein sequence ID" value="CAP06720.1"/>
    <property type="molecule type" value="Genomic_DNA"/>
</dbReference>
<dbReference type="RefSeq" id="WP_009873537.1">
    <property type="nucleotide sequence ID" value="NC_010280.2"/>
</dbReference>
<dbReference type="SMR" id="B0BB58"/>
<dbReference type="KEGG" id="ctl:CTLon_0322"/>
<dbReference type="HOGENOM" id="CLU_035714_4_0_0"/>
<dbReference type="UniPathway" id="UPA00056">
    <property type="reaction ID" value="UER00092"/>
</dbReference>
<dbReference type="Proteomes" id="UP001154401">
    <property type="component" value="Chromosome"/>
</dbReference>
<dbReference type="GO" id="GO:0030604">
    <property type="term" value="F:1-deoxy-D-xylulose-5-phosphate reductoisomerase activity"/>
    <property type="evidence" value="ECO:0007669"/>
    <property type="project" value="UniProtKB-UniRule"/>
</dbReference>
<dbReference type="GO" id="GO:0030145">
    <property type="term" value="F:manganese ion binding"/>
    <property type="evidence" value="ECO:0007669"/>
    <property type="project" value="TreeGrafter"/>
</dbReference>
<dbReference type="GO" id="GO:0070402">
    <property type="term" value="F:NADPH binding"/>
    <property type="evidence" value="ECO:0007669"/>
    <property type="project" value="InterPro"/>
</dbReference>
<dbReference type="GO" id="GO:0051484">
    <property type="term" value="P:isopentenyl diphosphate biosynthetic process, methylerythritol 4-phosphate pathway involved in terpenoid biosynthetic process"/>
    <property type="evidence" value="ECO:0007669"/>
    <property type="project" value="TreeGrafter"/>
</dbReference>
<dbReference type="FunFam" id="3.40.50.720:FF:000045">
    <property type="entry name" value="1-deoxy-D-xylulose 5-phosphate reductoisomerase"/>
    <property type="match status" value="1"/>
</dbReference>
<dbReference type="Gene3D" id="1.10.1740.10">
    <property type="match status" value="1"/>
</dbReference>
<dbReference type="Gene3D" id="3.40.50.720">
    <property type="entry name" value="NAD(P)-binding Rossmann-like Domain"/>
    <property type="match status" value="1"/>
</dbReference>
<dbReference type="HAMAP" id="MF_00183">
    <property type="entry name" value="DXP_reductoisom"/>
    <property type="match status" value="1"/>
</dbReference>
<dbReference type="InterPro" id="IPR003821">
    <property type="entry name" value="DXP_reductoisomerase"/>
</dbReference>
<dbReference type="InterPro" id="IPR013644">
    <property type="entry name" value="DXP_reductoisomerase_C"/>
</dbReference>
<dbReference type="InterPro" id="IPR013512">
    <property type="entry name" value="DXP_reductoisomerase_N"/>
</dbReference>
<dbReference type="InterPro" id="IPR026877">
    <property type="entry name" value="DXPR_C"/>
</dbReference>
<dbReference type="InterPro" id="IPR036169">
    <property type="entry name" value="DXPR_C_sf"/>
</dbReference>
<dbReference type="InterPro" id="IPR036291">
    <property type="entry name" value="NAD(P)-bd_dom_sf"/>
</dbReference>
<dbReference type="NCBIfam" id="TIGR00243">
    <property type="entry name" value="Dxr"/>
    <property type="match status" value="1"/>
</dbReference>
<dbReference type="PANTHER" id="PTHR30525">
    <property type="entry name" value="1-DEOXY-D-XYLULOSE 5-PHOSPHATE REDUCTOISOMERASE"/>
    <property type="match status" value="1"/>
</dbReference>
<dbReference type="PANTHER" id="PTHR30525:SF0">
    <property type="entry name" value="1-DEOXY-D-XYLULOSE 5-PHOSPHATE REDUCTOISOMERASE, CHLOROPLASTIC"/>
    <property type="match status" value="1"/>
</dbReference>
<dbReference type="Pfam" id="PF08436">
    <property type="entry name" value="DXP_redisom_C"/>
    <property type="match status" value="1"/>
</dbReference>
<dbReference type="Pfam" id="PF02670">
    <property type="entry name" value="DXP_reductoisom"/>
    <property type="match status" value="1"/>
</dbReference>
<dbReference type="Pfam" id="PF13288">
    <property type="entry name" value="DXPR_C"/>
    <property type="match status" value="1"/>
</dbReference>
<dbReference type="PIRSF" id="PIRSF006205">
    <property type="entry name" value="Dxp_reductismrs"/>
    <property type="match status" value="1"/>
</dbReference>
<dbReference type="SUPFAM" id="SSF69055">
    <property type="entry name" value="1-deoxy-D-xylulose-5-phosphate reductoisomerase, C-terminal domain"/>
    <property type="match status" value="1"/>
</dbReference>
<dbReference type="SUPFAM" id="SSF55347">
    <property type="entry name" value="Glyceraldehyde-3-phosphate dehydrogenase-like, C-terminal domain"/>
    <property type="match status" value="1"/>
</dbReference>
<dbReference type="SUPFAM" id="SSF51735">
    <property type="entry name" value="NAD(P)-binding Rossmann-fold domains"/>
    <property type="match status" value="1"/>
</dbReference>
<proteinExistence type="inferred from homology"/>
<gene>
    <name evidence="1" type="primary">dxr</name>
    <name type="ordered locus">CTLon_0322</name>
</gene>
<name>DXR_CHLTB</name>
<comment type="function">
    <text evidence="1">Catalyzes the NADPH-dependent rearrangement and reduction of 1-deoxy-D-xylulose-5-phosphate (DXP) to 2-C-methyl-D-erythritol 4-phosphate (MEP).</text>
</comment>
<comment type="catalytic activity">
    <reaction evidence="1">
        <text>2-C-methyl-D-erythritol 4-phosphate + NADP(+) = 1-deoxy-D-xylulose 5-phosphate + NADPH + H(+)</text>
        <dbReference type="Rhea" id="RHEA:13717"/>
        <dbReference type="ChEBI" id="CHEBI:15378"/>
        <dbReference type="ChEBI" id="CHEBI:57783"/>
        <dbReference type="ChEBI" id="CHEBI:57792"/>
        <dbReference type="ChEBI" id="CHEBI:58262"/>
        <dbReference type="ChEBI" id="CHEBI:58349"/>
        <dbReference type="EC" id="1.1.1.267"/>
    </reaction>
    <physiologicalReaction direction="right-to-left" evidence="1">
        <dbReference type="Rhea" id="RHEA:13719"/>
    </physiologicalReaction>
</comment>
<comment type="cofactor">
    <cofactor evidence="1">
        <name>Mg(2+)</name>
        <dbReference type="ChEBI" id="CHEBI:18420"/>
    </cofactor>
    <cofactor evidence="1">
        <name>Mn(2+)</name>
        <dbReference type="ChEBI" id="CHEBI:29035"/>
    </cofactor>
</comment>
<comment type="pathway">
    <text evidence="1">Isoprenoid biosynthesis; isopentenyl diphosphate biosynthesis via DXP pathway; isopentenyl diphosphate from 1-deoxy-D-xylulose 5-phosphate: step 1/6.</text>
</comment>
<comment type="similarity">
    <text evidence="1">Belongs to the DXR family.</text>
</comment>
<organism>
    <name type="scientific">Chlamydia trachomatis serovar L2b (strain UCH-1/proctitis)</name>
    <dbReference type="NCBI Taxonomy" id="471473"/>
    <lineage>
        <taxon>Bacteria</taxon>
        <taxon>Pseudomonadati</taxon>
        <taxon>Chlamydiota</taxon>
        <taxon>Chlamydiia</taxon>
        <taxon>Chlamydiales</taxon>
        <taxon>Chlamydiaceae</taxon>
        <taxon>Chlamydia/Chlamydophila group</taxon>
        <taxon>Chlamydia</taxon>
    </lineage>
</organism>
<sequence>MKHLALIGSTGSIGRQVLQVVRSIPDTFIIETLAAYGRNQEALISQIREFNPRVVAVREETTYKELRKLFPHIEILLGEEGLVSVATEPSVTITIVASSGIDALPAVIAAIRQKKTIALANKESLVAAGELVTTLARENGVQILPIDSEHNALFQCLEGRDSSTIKKLLLTASGGPLRNKSKEELQKVSLQEVLRHPVWNMGPKITVDSSTLVNKGLEIIEAFWLFGLEAVEIEAVIHPQSLVHGMVEFCDGTILSVMKPPSMLFPIQHVLTFPERSPAIGPGFDFLSNRTLEFFPIDEDRFPSVHLAKRVLLEKGSMGCFFNGANEALVHRFLAGEISWHQIVPKLQALVDQHRVQSCLSLEEILSVDAEARARAQEC</sequence>
<protein>
    <recommendedName>
        <fullName evidence="1">1-deoxy-D-xylulose 5-phosphate reductoisomerase</fullName>
        <shortName evidence="1">DXP reductoisomerase</shortName>
        <ecNumber evidence="1">1.1.1.267</ecNumber>
    </recommendedName>
    <alternativeName>
        <fullName evidence="1">1-deoxyxylulose-5-phosphate reductoisomerase</fullName>
    </alternativeName>
    <alternativeName>
        <fullName evidence="1">2-C-methyl-D-erythritol 4-phosphate synthase</fullName>
    </alternativeName>
</protein>
<accession>B0BB58</accession>
<evidence type="ECO:0000255" key="1">
    <source>
        <dbReference type="HAMAP-Rule" id="MF_00183"/>
    </source>
</evidence>
<reference key="1">
    <citation type="journal article" date="2008" name="Genome Res.">
        <title>Chlamydia trachomatis: genome sequence analysis of lymphogranuloma venereum isolates.</title>
        <authorList>
            <person name="Thomson N.R."/>
            <person name="Holden M.T.G."/>
            <person name="Carder C."/>
            <person name="Lennard N."/>
            <person name="Lockey S.J."/>
            <person name="Marsh P."/>
            <person name="Skipp P."/>
            <person name="O'Connor C.D."/>
            <person name="Goodhead I."/>
            <person name="Norbertzcak H."/>
            <person name="Harris B."/>
            <person name="Ormond D."/>
            <person name="Rance R."/>
            <person name="Quail M.A."/>
            <person name="Parkhill J."/>
            <person name="Stephens R.S."/>
            <person name="Clarke I.N."/>
        </authorList>
    </citation>
    <scope>NUCLEOTIDE SEQUENCE [LARGE SCALE GENOMIC DNA]</scope>
    <source>
        <strain>UCH-1/proctitis</strain>
    </source>
</reference>